<keyword id="KW-1015">Disulfide bond</keyword>
<keyword id="KW-0256">Endoplasmic reticulum</keyword>
<keyword id="KW-0325">Glycoprotein</keyword>
<keyword id="KW-0328">Glycosyltransferase</keyword>
<keyword id="KW-1185">Reference proteome</keyword>
<keyword id="KW-0964">Secreted</keyword>
<keyword id="KW-0732">Signal</keyword>
<keyword id="KW-0808">Transferase</keyword>
<reference evidence="4" key="1">
    <citation type="journal article" date="2002" name="Science">
        <title>The genome sequence of the malaria mosquito Anopheles gambiae.</title>
        <authorList>
            <person name="Holt R.A."/>
            <person name="Subramanian G.M."/>
            <person name="Halpern A."/>
            <person name="Sutton G.G."/>
            <person name="Charlab R."/>
            <person name="Nusskern D.R."/>
            <person name="Wincker P."/>
            <person name="Clark A.G."/>
            <person name="Ribeiro J.M.C."/>
            <person name="Wides R."/>
            <person name="Salzberg S.L."/>
            <person name="Loftus B.J."/>
            <person name="Yandell M.D."/>
            <person name="Majoros W.H."/>
            <person name="Rusch D.B."/>
            <person name="Lai Z."/>
            <person name="Kraft C.L."/>
            <person name="Abril J.F."/>
            <person name="Anthouard V."/>
            <person name="Arensburger P."/>
            <person name="Atkinson P.W."/>
            <person name="Baden H."/>
            <person name="de Berardinis V."/>
            <person name="Baldwin D."/>
            <person name="Benes V."/>
            <person name="Biedler J."/>
            <person name="Blass C."/>
            <person name="Bolanos R."/>
            <person name="Boscus D."/>
            <person name="Barnstead M."/>
            <person name="Cai S."/>
            <person name="Center A."/>
            <person name="Chaturverdi K."/>
            <person name="Christophides G.K."/>
            <person name="Chrystal M.A.M."/>
            <person name="Clamp M."/>
            <person name="Cravchik A."/>
            <person name="Curwen V."/>
            <person name="Dana A."/>
            <person name="Delcher A."/>
            <person name="Dew I."/>
            <person name="Evans C.A."/>
            <person name="Flanigan M."/>
            <person name="Grundschober-Freimoser A."/>
            <person name="Friedli L."/>
            <person name="Gu Z."/>
            <person name="Guan P."/>
            <person name="Guigo R."/>
            <person name="Hillenmeyer M.E."/>
            <person name="Hladun S.L."/>
            <person name="Hogan J.R."/>
            <person name="Hong Y.S."/>
            <person name="Hoover J."/>
            <person name="Jaillon O."/>
            <person name="Ke Z."/>
            <person name="Kodira C.D."/>
            <person name="Kokoza E."/>
            <person name="Koutsos A."/>
            <person name="Letunic I."/>
            <person name="Levitsky A.A."/>
            <person name="Liang Y."/>
            <person name="Lin J.-J."/>
            <person name="Lobo N.F."/>
            <person name="Lopez J.R."/>
            <person name="Malek J.A."/>
            <person name="McIntosh T.C."/>
            <person name="Meister S."/>
            <person name="Miller J.R."/>
            <person name="Mobarry C."/>
            <person name="Mongin E."/>
            <person name="Murphy S.D."/>
            <person name="O'Brochta D.A."/>
            <person name="Pfannkoch C."/>
            <person name="Qi R."/>
            <person name="Regier M.A."/>
            <person name="Remington K."/>
            <person name="Shao H."/>
            <person name="Sharakhova M.V."/>
            <person name="Sitter C.D."/>
            <person name="Shetty J."/>
            <person name="Smith T.J."/>
            <person name="Strong R."/>
            <person name="Sun J."/>
            <person name="Thomasova D."/>
            <person name="Ton L.Q."/>
            <person name="Topalis P."/>
            <person name="Tu Z.J."/>
            <person name="Unger M.F."/>
            <person name="Walenz B."/>
            <person name="Wang A.H."/>
            <person name="Wang J."/>
            <person name="Wang M."/>
            <person name="Wang X."/>
            <person name="Woodford K.J."/>
            <person name="Wortman J.R."/>
            <person name="Wu M."/>
            <person name="Yao A."/>
            <person name="Zdobnov E.M."/>
            <person name="Zhang H."/>
            <person name="Zhao Q."/>
            <person name="Zhao S."/>
            <person name="Zhu S.C."/>
            <person name="Zhimulev I."/>
            <person name="Coluzzi M."/>
            <person name="della Torre A."/>
            <person name="Roth C.W."/>
            <person name="Louis C."/>
            <person name="Kalush F."/>
            <person name="Mural R.J."/>
            <person name="Myers E.W."/>
            <person name="Adams M.D."/>
            <person name="Smith H.O."/>
            <person name="Broder S."/>
            <person name="Gardner M.J."/>
            <person name="Fraser C.M."/>
            <person name="Birney E."/>
            <person name="Bork P."/>
            <person name="Brey P.T."/>
            <person name="Venter J.C."/>
            <person name="Weissenbach J."/>
            <person name="Kafatos F.C."/>
            <person name="Collins F.H."/>
            <person name="Hoffman S.L."/>
        </authorList>
    </citation>
    <scope>NUCLEOTIDE SEQUENCE [LARGE SCALE GENOMIC DNA]</scope>
    <source>
        <strain>PEST</strain>
    </source>
</reference>
<gene>
    <name type="ORF">AGAP004267</name>
</gene>
<evidence type="ECO:0000250" key="1">
    <source>
        <dbReference type="UniProtKB" id="Q8T045"/>
    </source>
</evidence>
<evidence type="ECO:0000255" key="2"/>
<evidence type="ECO:0000305" key="3"/>
<evidence type="ECO:0000312" key="4">
    <source>
        <dbReference type="EMBL" id="EAU76986.1"/>
    </source>
</evidence>
<feature type="signal peptide" evidence="2">
    <location>
        <begin position="1"/>
        <end position="18"/>
    </location>
</feature>
<feature type="chain" id="PRO_0000342690" description="O-glucosyltransferase rumi homolog">
    <location>
        <begin position="19"/>
        <end position="399"/>
    </location>
</feature>
<feature type="region of interest" description="Interaction with the consensus sequence C-X-S-X-[PA]-C in peptide substrates" evidence="1">
    <location>
        <begin position="189"/>
        <end position="194"/>
    </location>
</feature>
<feature type="active site" description="Proton donor/acceptor" evidence="1">
    <location>
        <position position="149"/>
    </location>
</feature>
<feature type="binding site" evidence="1">
    <location>
        <begin position="224"/>
        <end position="228"/>
    </location>
    <ligand>
        <name>UDP-alpha-D-glucose</name>
        <dbReference type="ChEBI" id="CHEBI:58885"/>
    </ligand>
</feature>
<feature type="binding site" evidence="1">
    <location>
        <position position="232"/>
    </location>
    <ligand>
        <name>UDP-alpha-D-glucose</name>
        <dbReference type="ChEBI" id="CHEBI:58885"/>
    </ligand>
</feature>
<feature type="binding site" evidence="1">
    <location>
        <begin position="271"/>
        <end position="273"/>
    </location>
    <ligand>
        <name>UDP-alpha-D-glucose</name>
        <dbReference type="ChEBI" id="CHEBI:58885"/>
    </ligand>
</feature>
<feature type="binding site" evidence="1">
    <location>
        <begin position="289"/>
        <end position="293"/>
    </location>
    <ligand>
        <name>UDP-alpha-D-glucose</name>
        <dbReference type="ChEBI" id="CHEBI:58885"/>
    </ligand>
</feature>
<feature type="site" description="Interaction with the consensus sequence C-X-S-X-[PA]-C in peptide substrates" evidence="1">
    <location>
        <position position="120"/>
    </location>
</feature>
<feature type="site" description="Interaction with the consensus sequence C-X-S-X-[PA]-C in peptide substrates" evidence="1">
    <location>
        <position position="227"/>
    </location>
</feature>
<feature type="site" description="Interaction with the consensus sequence C-X-S-X-[PA]-C in peptide substrates" evidence="1">
    <location>
        <position position="254"/>
    </location>
</feature>
<feature type="glycosylation site" description="N-linked (GlcNAc...) asparagine" evidence="2">
    <location>
        <position position="19"/>
    </location>
</feature>
<feature type="glycosylation site" description="N-linked (GlcNAc...) asparagine" evidence="2">
    <location>
        <position position="67"/>
    </location>
</feature>
<feature type="disulfide bond" evidence="1">
    <location>
        <begin position="66"/>
        <end position="73"/>
    </location>
</feature>
<feature type="disulfide bond" evidence="1">
    <location>
        <begin position="71"/>
        <end position="373"/>
    </location>
</feature>
<feature type="disulfide bond" evidence="1">
    <location>
        <begin position="118"/>
        <end position="124"/>
    </location>
</feature>
<feature type="disulfide bond" evidence="1">
    <location>
        <begin position="277"/>
        <end position="300"/>
    </location>
</feature>
<dbReference type="EC" id="2.4.1.-" evidence="1"/>
<dbReference type="EMBL" id="AAAB01008880">
    <property type="protein sequence ID" value="EAU76986.1"/>
    <property type="molecule type" value="Genomic_DNA"/>
</dbReference>
<dbReference type="RefSeq" id="XP_001230897.1">
    <property type="nucleotide sequence ID" value="XM_001230896.3"/>
</dbReference>
<dbReference type="SMR" id="A0NDG6"/>
<dbReference type="FunCoup" id="A0NDG6">
    <property type="interactions" value="2045"/>
</dbReference>
<dbReference type="STRING" id="7165.A0NDG6"/>
<dbReference type="PaxDb" id="7165-AGAP004267-PA"/>
<dbReference type="EnsemblMetazoa" id="AGAP004267-RA">
    <property type="protein sequence ID" value="AGAP004267-PA"/>
    <property type="gene ID" value="AGAP004267"/>
</dbReference>
<dbReference type="GeneID" id="4576887"/>
<dbReference type="KEGG" id="aga:4576887"/>
<dbReference type="VEuPathDB" id="VectorBase:AGAMI1_010369"/>
<dbReference type="VEuPathDB" id="VectorBase:AGAP004267"/>
<dbReference type="eggNOG" id="KOG2458">
    <property type="taxonomic scope" value="Eukaryota"/>
</dbReference>
<dbReference type="HOGENOM" id="CLU_041919_1_0_1"/>
<dbReference type="InParanoid" id="A0NDG6"/>
<dbReference type="OMA" id="EDDCMFP"/>
<dbReference type="PhylomeDB" id="A0NDG6"/>
<dbReference type="UniPathway" id="UPA00378"/>
<dbReference type="Proteomes" id="UP000007062">
    <property type="component" value="Chromosome 2R"/>
</dbReference>
<dbReference type="GO" id="GO:0012505">
    <property type="term" value="C:endomembrane system"/>
    <property type="evidence" value="ECO:0000318"/>
    <property type="project" value="GO_Central"/>
</dbReference>
<dbReference type="GO" id="GO:0005788">
    <property type="term" value="C:endoplasmic reticulum lumen"/>
    <property type="evidence" value="ECO:0007669"/>
    <property type="project" value="UniProtKB-SubCell"/>
</dbReference>
<dbReference type="GO" id="GO:0005576">
    <property type="term" value="C:extracellular region"/>
    <property type="evidence" value="ECO:0007669"/>
    <property type="project" value="UniProtKB-SubCell"/>
</dbReference>
<dbReference type="GO" id="GO:0035251">
    <property type="term" value="F:UDP-glucosyltransferase activity"/>
    <property type="evidence" value="ECO:0000250"/>
    <property type="project" value="UniProtKB"/>
</dbReference>
<dbReference type="GO" id="GO:0035252">
    <property type="term" value="F:UDP-xylosyltransferase activity"/>
    <property type="evidence" value="ECO:0000318"/>
    <property type="project" value="GO_Central"/>
</dbReference>
<dbReference type="GO" id="GO:0045747">
    <property type="term" value="P:positive regulation of Notch signaling pathway"/>
    <property type="evidence" value="ECO:0000318"/>
    <property type="project" value="GO_Central"/>
</dbReference>
<dbReference type="GO" id="GO:0006493">
    <property type="term" value="P:protein O-linked glycosylation"/>
    <property type="evidence" value="ECO:0000318"/>
    <property type="project" value="GO_Central"/>
</dbReference>
<dbReference type="GO" id="GO:0018242">
    <property type="term" value="P:protein O-linked glycosylation via serine"/>
    <property type="evidence" value="ECO:0000250"/>
    <property type="project" value="UniProtKB"/>
</dbReference>
<dbReference type="InterPro" id="IPR006598">
    <property type="entry name" value="CAP10"/>
</dbReference>
<dbReference type="InterPro" id="IPR051091">
    <property type="entry name" value="O-Glucosyltr/Glycosyltrsf_90"/>
</dbReference>
<dbReference type="PANTHER" id="PTHR12203">
    <property type="entry name" value="KDEL LYS-ASP-GLU-LEU CONTAINING - RELATED"/>
    <property type="match status" value="1"/>
</dbReference>
<dbReference type="PANTHER" id="PTHR12203:SF35">
    <property type="entry name" value="PROTEIN O-GLUCOSYLTRANSFERASE 1"/>
    <property type="match status" value="1"/>
</dbReference>
<dbReference type="Pfam" id="PF05686">
    <property type="entry name" value="Glyco_transf_90"/>
    <property type="match status" value="1"/>
</dbReference>
<dbReference type="SMART" id="SM00672">
    <property type="entry name" value="CAP10"/>
    <property type="match status" value="1"/>
</dbReference>
<proteinExistence type="inferred from homology"/>
<protein>
    <recommendedName>
        <fullName>O-glucosyltransferase rumi homolog</fullName>
        <ecNumber evidence="1">2.4.1.-</ecNumber>
    </recommendedName>
</protein>
<organism>
    <name type="scientific">Anopheles gambiae</name>
    <name type="common">African malaria mosquito</name>
    <dbReference type="NCBI Taxonomy" id="7165"/>
    <lineage>
        <taxon>Eukaryota</taxon>
        <taxon>Metazoa</taxon>
        <taxon>Ecdysozoa</taxon>
        <taxon>Arthropoda</taxon>
        <taxon>Hexapoda</taxon>
        <taxon>Insecta</taxon>
        <taxon>Pterygota</taxon>
        <taxon>Neoptera</taxon>
        <taxon>Endopterygota</taxon>
        <taxon>Diptera</taxon>
        <taxon>Nematocera</taxon>
        <taxon>Culicoidea</taxon>
        <taxon>Culicidae</taxon>
        <taxon>Anophelinae</taxon>
        <taxon>Anopheles</taxon>
    </lineage>
</organism>
<name>RUMI_ANOGA</name>
<sequence length="399" mass="46360">MHFIIGIVICLSLSVIQSNTSDEGMCMAKEQCTDPEESTTGRSLYSADYNKYFNAIETALAGYVACNSTNCNCHADVLKADLKPFKAHGITKEMINRAKQYGTHYQVIGHKLYRQRECMFPARCSGVEHFVRPLLPLLPDMDLIVNCRDWPQIHRHWSKEKIPVLSFSKTAEYLDIMYPAWAFWEGGPAIALYPTGLGRWDLHRQTITKASADWEAKEPKAFFRGSRTSDERDALVLLSRAQPSLVDAQYTKNQAWKSPQDTLNAEPAREVTLEEHCRYRFLFNFRGVAASFRFKHLFLCRSLVFHVGDEWQEFFYPSLKPWVHYVPVPVRSTPEELEALITFFQEHDQLARAIAERGYEHIWNHLRMADVECYWKKLLKRYGKLIRYTVERDSTLIEV</sequence>
<comment type="function">
    <text evidence="1">Protein O-glucosyltransferase. Catalyzes the reaction that attaches glucose through an O-glycosidic linkage to a conserved serine residue found in the consensus sequence C-X-S-X-[PA]-C in epidermal growth factor-like repeats. Regulates Notch signaling by glucosylating Notch in the ER, glucosylation is required for the correct folding and cleavage of Notch.</text>
</comment>
<comment type="pathway">
    <text evidence="1">Protein modification; protein glycosylation.</text>
</comment>
<comment type="subcellular location">
    <subcellularLocation>
        <location evidence="1">Endoplasmic reticulum lumen</location>
    </subcellularLocation>
    <subcellularLocation>
        <location evidence="3">Secreted</location>
    </subcellularLocation>
</comment>
<comment type="similarity">
    <text evidence="3">Belongs to the glycosyltransferase 90 family.</text>
</comment>
<accession>A0NDG6</accession>